<proteinExistence type="inferred from homology"/>
<organism>
    <name type="scientific">Photorhabdus laumondii subsp. laumondii (strain DSM 15139 / CIP 105565 / TT01)</name>
    <name type="common">Photorhabdus luminescens subsp. laumondii</name>
    <dbReference type="NCBI Taxonomy" id="243265"/>
    <lineage>
        <taxon>Bacteria</taxon>
        <taxon>Pseudomonadati</taxon>
        <taxon>Pseudomonadota</taxon>
        <taxon>Gammaproteobacteria</taxon>
        <taxon>Enterobacterales</taxon>
        <taxon>Morganellaceae</taxon>
        <taxon>Photorhabdus</taxon>
    </lineage>
</organism>
<dbReference type="EC" id="2.7.1.23" evidence="1"/>
<dbReference type="EMBL" id="BX571870">
    <property type="protein sequence ID" value="CAE15747.1"/>
    <property type="molecule type" value="Genomic_DNA"/>
</dbReference>
<dbReference type="RefSeq" id="WP_011147557.1">
    <property type="nucleotide sequence ID" value="NC_005126.1"/>
</dbReference>
<dbReference type="SMR" id="Q7N1U6"/>
<dbReference type="STRING" id="243265.plu3373"/>
<dbReference type="GeneID" id="48849625"/>
<dbReference type="KEGG" id="plu:plu3373"/>
<dbReference type="eggNOG" id="COG0061">
    <property type="taxonomic scope" value="Bacteria"/>
</dbReference>
<dbReference type="HOGENOM" id="CLU_008831_0_1_6"/>
<dbReference type="OrthoDB" id="9774737at2"/>
<dbReference type="Proteomes" id="UP000002514">
    <property type="component" value="Chromosome"/>
</dbReference>
<dbReference type="GO" id="GO:0005737">
    <property type="term" value="C:cytoplasm"/>
    <property type="evidence" value="ECO:0007669"/>
    <property type="project" value="UniProtKB-SubCell"/>
</dbReference>
<dbReference type="GO" id="GO:0005524">
    <property type="term" value="F:ATP binding"/>
    <property type="evidence" value="ECO:0007669"/>
    <property type="project" value="UniProtKB-KW"/>
</dbReference>
<dbReference type="GO" id="GO:0046872">
    <property type="term" value="F:metal ion binding"/>
    <property type="evidence" value="ECO:0007669"/>
    <property type="project" value="UniProtKB-UniRule"/>
</dbReference>
<dbReference type="GO" id="GO:0051287">
    <property type="term" value="F:NAD binding"/>
    <property type="evidence" value="ECO:0007669"/>
    <property type="project" value="UniProtKB-ARBA"/>
</dbReference>
<dbReference type="GO" id="GO:0003951">
    <property type="term" value="F:NAD+ kinase activity"/>
    <property type="evidence" value="ECO:0007669"/>
    <property type="project" value="UniProtKB-UniRule"/>
</dbReference>
<dbReference type="GO" id="GO:0019674">
    <property type="term" value="P:NAD metabolic process"/>
    <property type="evidence" value="ECO:0007669"/>
    <property type="project" value="InterPro"/>
</dbReference>
<dbReference type="GO" id="GO:0006741">
    <property type="term" value="P:NADP biosynthetic process"/>
    <property type="evidence" value="ECO:0007669"/>
    <property type="project" value="UniProtKB-UniRule"/>
</dbReference>
<dbReference type="FunFam" id="2.60.200.30:FF:000001">
    <property type="entry name" value="NAD kinase"/>
    <property type="match status" value="1"/>
</dbReference>
<dbReference type="FunFam" id="3.40.50.10330:FF:000004">
    <property type="entry name" value="NAD kinase"/>
    <property type="match status" value="1"/>
</dbReference>
<dbReference type="Gene3D" id="3.40.50.10330">
    <property type="entry name" value="Probable inorganic polyphosphate/atp-NAD kinase, domain 1"/>
    <property type="match status" value="1"/>
</dbReference>
<dbReference type="Gene3D" id="2.60.200.30">
    <property type="entry name" value="Probable inorganic polyphosphate/atp-NAD kinase, domain 2"/>
    <property type="match status" value="1"/>
</dbReference>
<dbReference type="HAMAP" id="MF_00361">
    <property type="entry name" value="NAD_kinase"/>
    <property type="match status" value="1"/>
</dbReference>
<dbReference type="InterPro" id="IPR017438">
    <property type="entry name" value="ATP-NAD_kinase_N"/>
</dbReference>
<dbReference type="InterPro" id="IPR017437">
    <property type="entry name" value="ATP-NAD_kinase_PpnK-typ_C"/>
</dbReference>
<dbReference type="InterPro" id="IPR016064">
    <property type="entry name" value="NAD/diacylglycerol_kinase_sf"/>
</dbReference>
<dbReference type="InterPro" id="IPR002504">
    <property type="entry name" value="NADK"/>
</dbReference>
<dbReference type="NCBIfam" id="NF002306">
    <property type="entry name" value="PRK01231.1"/>
    <property type="match status" value="1"/>
</dbReference>
<dbReference type="NCBIfam" id="NF002893">
    <property type="entry name" value="PRK03378.1"/>
    <property type="match status" value="1"/>
</dbReference>
<dbReference type="PANTHER" id="PTHR20275">
    <property type="entry name" value="NAD KINASE"/>
    <property type="match status" value="1"/>
</dbReference>
<dbReference type="PANTHER" id="PTHR20275:SF0">
    <property type="entry name" value="NAD KINASE"/>
    <property type="match status" value="1"/>
</dbReference>
<dbReference type="Pfam" id="PF01513">
    <property type="entry name" value="NAD_kinase"/>
    <property type="match status" value="1"/>
</dbReference>
<dbReference type="Pfam" id="PF20143">
    <property type="entry name" value="NAD_kinase_C"/>
    <property type="match status" value="1"/>
</dbReference>
<dbReference type="SUPFAM" id="SSF111331">
    <property type="entry name" value="NAD kinase/diacylglycerol kinase-like"/>
    <property type="match status" value="1"/>
</dbReference>
<keyword id="KW-0067">ATP-binding</keyword>
<keyword id="KW-0963">Cytoplasm</keyword>
<keyword id="KW-0418">Kinase</keyword>
<keyword id="KW-0520">NAD</keyword>
<keyword id="KW-0521">NADP</keyword>
<keyword id="KW-0547">Nucleotide-binding</keyword>
<keyword id="KW-1185">Reference proteome</keyword>
<keyword id="KW-0808">Transferase</keyword>
<protein>
    <recommendedName>
        <fullName evidence="1">NAD kinase</fullName>
        <ecNumber evidence="1">2.7.1.23</ecNumber>
    </recommendedName>
    <alternativeName>
        <fullName evidence="1">ATP-dependent NAD kinase</fullName>
    </alternativeName>
</protein>
<sequence>MNKKFKCIGIVGHPRHPEALATHEMLYHWLKSKGYSVIIDRQVAKDIGLKDAQTGGLTEIGKQADLAVVVGGDGNMLGAARVLSRYDIKVIGINRGNLGFLTDLDPDNALQQLSEVLDGEYRNEHRFLLEAQVRRNGQKPRISTAINEVVLHPGKVAHMIEFEVYIDERFAFSQRSDGLIIATPTGSTAYSLSAGGPILTPNLDAIVLVPMFPHTLSSRPLVISSESSIRLKFSQNSNDYEVSCDSQIVLPIQDGEDVIISRSKQKLNLIHPQDYNYFNTLSTKLSWSKKMF</sequence>
<comment type="function">
    <text evidence="1">Involved in the regulation of the intracellular balance of NAD and NADP, and is a key enzyme in the biosynthesis of NADP. Catalyzes specifically the phosphorylation on 2'-hydroxyl of the adenosine moiety of NAD to yield NADP.</text>
</comment>
<comment type="catalytic activity">
    <reaction evidence="1">
        <text>NAD(+) + ATP = ADP + NADP(+) + H(+)</text>
        <dbReference type="Rhea" id="RHEA:18629"/>
        <dbReference type="ChEBI" id="CHEBI:15378"/>
        <dbReference type="ChEBI" id="CHEBI:30616"/>
        <dbReference type="ChEBI" id="CHEBI:57540"/>
        <dbReference type="ChEBI" id="CHEBI:58349"/>
        <dbReference type="ChEBI" id="CHEBI:456216"/>
        <dbReference type="EC" id="2.7.1.23"/>
    </reaction>
</comment>
<comment type="cofactor">
    <cofactor evidence="1">
        <name>a divalent metal cation</name>
        <dbReference type="ChEBI" id="CHEBI:60240"/>
    </cofactor>
</comment>
<comment type="subcellular location">
    <subcellularLocation>
        <location evidence="1">Cytoplasm</location>
    </subcellularLocation>
</comment>
<comment type="similarity">
    <text evidence="1">Belongs to the NAD kinase family.</text>
</comment>
<name>NADK_PHOLL</name>
<gene>
    <name evidence="1" type="primary">nadK</name>
    <name type="ordered locus">plu3373</name>
</gene>
<accession>Q7N1U6</accession>
<reference key="1">
    <citation type="journal article" date="2003" name="Nat. Biotechnol.">
        <title>The genome sequence of the entomopathogenic bacterium Photorhabdus luminescens.</title>
        <authorList>
            <person name="Duchaud E."/>
            <person name="Rusniok C."/>
            <person name="Frangeul L."/>
            <person name="Buchrieser C."/>
            <person name="Givaudan A."/>
            <person name="Taourit S."/>
            <person name="Bocs S."/>
            <person name="Boursaux-Eude C."/>
            <person name="Chandler M."/>
            <person name="Charles J.-F."/>
            <person name="Dassa E."/>
            <person name="Derose R."/>
            <person name="Derzelle S."/>
            <person name="Freyssinet G."/>
            <person name="Gaudriault S."/>
            <person name="Medigue C."/>
            <person name="Lanois A."/>
            <person name="Powell K."/>
            <person name="Siguier P."/>
            <person name="Vincent R."/>
            <person name="Wingate V."/>
            <person name="Zouine M."/>
            <person name="Glaser P."/>
            <person name="Boemare N."/>
            <person name="Danchin A."/>
            <person name="Kunst F."/>
        </authorList>
    </citation>
    <scope>NUCLEOTIDE SEQUENCE [LARGE SCALE GENOMIC DNA]</scope>
    <source>
        <strain>DSM 15139 / CIP 105565 / TT01</strain>
    </source>
</reference>
<feature type="chain" id="PRO_0000229665" description="NAD kinase">
    <location>
        <begin position="1"/>
        <end position="292"/>
    </location>
</feature>
<feature type="active site" description="Proton acceptor" evidence="1">
    <location>
        <position position="73"/>
    </location>
</feature>
<feature type="binding site" evidence="1">
    <location>
        <begin position="73"/>
        <end position="74"/>
    </location>
    <ligand>
        <name>NAD(+)</name>
        <dbReference type="ChEBI" id="CHEBI:57540"/>
    </ligand>
</feature>
<feature type="binding site" evidence="1">
    <location>
        <begin position="147"/>
        <end position="148"/>
    </location>
    <ligand>
        <name>NAD(+)</name>
        <dbReference type="ChEBI" id="CHEBI:57540"/>
    </ligand>
</feature>
<feature type="binding site" evidence="1">
    <location>
        <position position="158"/>
    </location>
    <ligand>
        <name>NAD(+)</name>
        <dbReference type="ChEBI" id="CHEBI:57540"/>
    </ligand>
</feature>
<feature type="binding site" evidence="1">
    <location>
        <position position="175"/>
    </location>
    <ligand>
        <name>NAD(+)</name>
        <dbReference type="ChEBI" id="CHEBI:57540"/>
    </ligand>
</feature>
<feature type="binding site" evidence="1">
    <location>
        <position position="177"/>
    </location>
    <ligand>
        <name>NAD(+)</name>
        <dbReference type="ChEBI" id="CHEBI:57540"/>
    </ligand>
</feature>
<feature type="binding site" evidence="1">
    <location>
        <begin position="188"/>
        <end position="193"/>
    </location>
    <ligand>
        <name>NAD(+)</name>
        <dbReference type="ChEBI" id="CHEBI:57540"/>
    </ligand>
</feature>
<feature type="binding site" evidence="1">
    <location>
        <position position="247"/>
    </location>
    <ligand>
        <name>NAD(+)</name>
        <dbReference type="ChEBI" id="CHEBI:57540"/>
    </ligand>
</feature>
<evidence type="ECO:0000255" key="1">
    <source>
        <dbReference type="HAMAP-Rule" id="MF_00361"/>
    </source>
</evidence>